<reference key="1">
    <citation type="journal article" date="2004" name="Nat. Biotechnol.">
        <title>The genome sequence of the extreme thermophile Thermus thermophilus.</title>
        <authorList>
            <person name="Henne A."/>
            <person name="Brueggemann H."/>
            <person name="Raasch C."/>
            <person name="Wiezer A."/>
            <person name="Hartsch T."/>
            <person name="Liesegang H."/>
            <person name="Johann A."/>
            <person name="Lienard T."/>
            <person name="Gohl O."/>
            <person name="Martinez-Arias R."/>
            <person name="Jacobi C."/>
            <person name="Starkuviene V."/>
            <person name="Schlenczeck S."/>
            <person name="Dencker S."/>
            <person name="Huber R."/>
            <person name="Klenk H.-P."/>
            <person name="Kramer W."/>
            <person name="Merkl R."/>
            <person name="Gottschalk G."/>
            <person name="Fritz H.-J."/>
        </authorList>
    </citation>
    <scope>NUCLEOTIDE SEQUENCE [LARGE SCALE GENOMIC DNA]</scope>
    <source>
        <strain>ATCC BAA-163 / DSM 7039 / HB27</strain>
    </source>
</reference>
<accession>Q72K87</accession>
<keyword id="KW-0067">ATP-binding</keyword>
<keyword id="KW-0173">Coenzyme A biosynthesis</keyword>
<keyword id="KW-0963">Cytoplasm</keyword>
<keyword id="KW-0460">Magnesium</keyword>
<keyword id="KW-0547">Nucleotide-binding</keyword>
<keyword id="KW-0548">Nucleotidyltransferase</keyword>
<keyword id="KW-0808">Transferase</keyword>
<proteinExistence type="inferred from homology"/>
<feature type="chain" id="PRO_0000156297" description="Phosphopantetheine adenylyltransferase">
    <location>
        <begin position="1"/>
        <end position="160"/>
    </location>
</feature>
<feature type="binding site" evidence="1">
    <location>
        <begin position="8"/>
        <end position="9"/>
    </location>
    <ligand>
        <name>ATP</name>
        <dbReference type="ChEBI" id="CHEBI:30616"/>
    </ligand>
</feature>
<feature type="binding site" evidence="1">
    <location>
        <position position="8"/>
    </location>
    <ligand>
        <name>substrate</name>
    </ligand>
</feature>
<feature type="binding site" evidence="1">
    <location>
        <position position="16"/>
    </location>
    <ligand>
        <name>ATP</name>
        <dbReference type="ChEBI" id="CHEBI:30616"/>
    </ligand>
</feature>
<feature type="binding site" evidence="1">
    <location>
        <position position="40"/>
    </location>
    <ligand>
        <name>substrate</name>
    </ligand>
</feature>
<feature type="binding site" evidence="1">
    <location>
        <position position="74"/>
    </location>
    <ligand>
        <name>substrate</name>
    </ligand>
</feature>
<feature type="binding site" evidence="1">
    <location>
        <position position="88"/>
    </location>
    <ligand>
        <name>substrate</name>
    </ligand>
</feature>
<feature type="binding site" evidence="1">
    <location>
        <begin position="89"/>
        <end position="91"/>
    </location>
    <ligand>
        <name>ATP</name>
        <dbReference type="ChEBI" id="CHEBI:30616"/>
    </ligand>
</feature>
<feature type="binding site" evidence="1">
    <location>
        <position position="99"/>
    </location>
    <ligand>
        <name>ATP</name>
        <dbReference type="ChEBI" id="CHEBI:30616"/>
    </ligand>
</feature>
<feature type="binding site" evidence="1">
    <location>
        <begin position="124"/>
        <end position="130"/>
    </location>
    <ligand>
        <name>ATP</name>
        <dbReference type="ChEBI" id="CHEBI:30616"/>
    </ligand>
</feature>
<feature type="site" description="Transition state stabilizer" evidence="1">
    <location>
        <position position="16"/>
    </location>
</feature>
<gene>
    <name evidence="1" type="primary">coaD</name>
    <name type="ordered locus">TT_C0560</name>
</gene>
<sequence>MHVVYPGSFDPLTNGHLDVIQRASRLFEKVTVAVLENPSKRGQYLFSAEERLAIIREATAHLANVEAATFSGLLVDFVRRVGAQAIVKGLRAVSDYEYELQMAHLNRQLYPGLETLFILAATRYSFVSSTMVKEIARYGGDVSKLVPPATLRALKAKLGQ</sequence>
<name>COAD_THET2</name>
<evidence type="ECO:0000255" key="1">
    <source>
        <dbReference type="HAMAP-Rule" id="MF_00151"/>
    </source>
</evidence>
<dbReference type="EC" id="2.7.7.3" evidence="1"/>
<dbReference type="EMBL" id="AE017221">
    <property type="protein sequence ID" value="AAS80908.1"/>
    <property type="molecule type" value="Genomic_DNA"/>
</dbReference>
<dbReference type="RefSeq" id="WP_011173005.1">
    <property type="nucleotide sequence ID" value="NC_005835.1"/>
</dbReference>
<dbReference type="SMR" id="Q72K87"/>
<dbReference type="DrugBank" id="DB03912">
    <property type="generic name" value="D-pantetheine 4'-phosphate"/>
</dbReference>
<dbReference type="GeneID" id="3169134"/>
<dbReference type="KEGG" id="tth:TT_C0560"/>
<dbReference type="eggNOG" id="COG0669">
    <property type="taxonomic scope" value="Bacteria"/>
</dbReference>
<dbReference type="HOGENOM" id="CLU_100149_0_1_0"/>
<dbReference type="OrthoDB" id="9806661at2"/>
<dbReference type="UniPathway" id="UPA00241">
    <property type="reaction ID" value="UER00355"/>
</dbReference>
<dbReference type="Proteomes" id="UP000000592">
    <property type="component" value="Chromosome"/>
</dbReference>
<dbReference type="GO" id="GO:0005737">
    <property type="term" value="C:cytoplasm"/>
    <property type="evidence" value="ECO:0007669"/>
    <property type="project" value="UniProtKB-SubCell"/>
</dbReference>
<dbReference type="GO" id="GO:0005524">
    <property type="term" value="F:ATP binding"/>
    <property type="evidence" value="ECO:0007669"/>
    <property type="project" value="UniProtKB-KW"/>
</dbReference>
<dbReference type="GO" id="GO:0004595">
    <property type="term" value="F:pantetheine-phosphate adenylyltransferase activity"/>
    <property type="evidence" value="ECO:0007669"/>
    <property type="project" value="UniProtKB-UniRule"/>
</dbReference>
<dbReference type="GO" id="GO:0015937">
    <property type="term" value="P:coenzyme A biosynthetic process"/>
    <property type="evidence" value="ECO:0007669"/>
    <property type="project" value="UniProtKB-UniRule"/>
</dbReference>
<dbReference type="CDD" id="cd02163">
    <property type="entry name" value="PPAT"/>
    <property type="match status" value="1"/>
</dbReference>
<dbReference type="Gene3D" id="3.40.50.620">
    <property type="entry name" value="HUPs"/>
    <property type="match status" value="1"/>
</dbReference>
<dbReference type="HAMAP" id="MF_00151">
    <property type="entry name" value="PPAT_bact"/>
    <property type="match status" value="1"/>
</dbReference>
<dbReference type="InterPro" id="IPR004821">
    <property type="entry name" value="Cyt_trans-like"/>
</dbReference>
<dbReference type="InterPro" id="IPR001980">
    <property type="entry name" value="PPAT"/>
</dbReference>
<dbReference type="InterPro" id="IPR014729">
    <property type="entry name" value="Rossmann-like_a/b/a_fold"/>
</dbReference>
<dbReference type="NCBIfam" id="TIGR01510">
    <property type="entry name" value="coaD_prev_kdtB"/>
    <property type="match status" value="1"/>
</dbReference>
<dbReference type="NCBIfam" id="TIGR00125">
    <property type="entry name" value="cyt_tran_rel"/>
    <property type="match status" value="1"/>
</dbReference>
<dbReference type="PANTHER" id="PTHR21342">
    <property type="entry name" value="PHOSPHOPANTETHEINE ADENYLYLTRANSFERASE"/>
    <property type="match status" value="1"/>
</dbReference>
<dbReference type="PANTHER" id="PTHR21342:SF1">
    <property type="entry name" value="PHOSPHOPANTETHEINE ADENYLYLTRANSFERASE"/>
    <property type="match status" value="1"/>
</dbReference>
<dbReference type="Pfam" id="PF01467">
    <property type="entry name" value="CTP_transf_like"/>
    <property type="match status" value="1"/>
</dbReference>
<dbReference type="PRINTS" id="PR01020">
    <property type="entry name" value="LPSBIOSNTHSS"/>
</dbReference>
<dbReference type="SUPFAM" id="SSF52374">
    <property type="entry name" value="Nucleotidylyl transferase"/>
    <property type="match status" value="1"/>
</dbReference>
<comment type="function">
    <text evidence="1">Reversibly transfers an adenylyl group from ATP to 4'-phosphopantetheine, yielding dephospho-CoA (dPCoA) and pyrophosphate.</text>
</comment>
<comment type="catalytic activity">
    <reaction evidence="1">
        <text>(R)-4'-phosphopantetheine + ATP + H(+) = 3'-dephospho-CoA + diphosphate</text>
        <dbReference type="Rhea" id="RHEA:19801"/>
        <dbReference type="ChEBI" id="CHEBI:15378"/>
        <dbReference type="ChEBI" id="CHEBI:30616"/>
        <dbReference type="ChEBI" id="CHEBI:33019"/>
        <dbReference type="ChEBI" id="CHEBI:57328"/>
        <dbReference type="ChEBI" id="CHEBI:61723"/>
        <dbReference type="EC" id="2.7.7.3"/>
    </reaction>
</comment>
<comment type="cofactor">
    <cofactor evidence="1">
        <name>Mg(2+)</name>
        <dbReference type="ChEBI" id="CHEBI:18420"/>
    </cofactor>
</comment>
<comment type="pathway">
    <text evidence="1">Cofactor biosynthesis; coenzyme A biosynthesis; CoA from (R)-pantothenate: step 4/5.</text>
</comment>
<comment type="subunit">
    <text evidence="1">Homohexamer.</text>
</comment>
<comment type="subcellular location">
    <subcellularLocation>
        <location evidence="1">Cytoplasm</location>
    </subcellularLocation>
</comment>
<comment type="similarity">
    <text evidence="1">Belongs to the bacterial CoaD family.</text>
</comment>
<organism>
    <name type="scientific">Thermus thermophilus (strain ATCC BAA-163 / DSM 7039 / HB27)</name>
    <dbReference type="NCBI Taxonomy" id="262724"/>
    <lineage>
        <taxon>Bacteria</taxon>
        <taxon>Thermotogati</taxon>
        <taxon>Deinococcota</taxon>
        <taxon>Deinococci</taxon>
        <taxon>Thermales</taxon>
        <taxon>Thermaceae</taxon>
        <taxon>Thermus</taxon>
    </lineage>
</organism>
<protein>
    <recommendedName>
        <fullName evidence="1">Phosphopantetheine adenylyltransferase</fullName>
        <ecNumber evidence="1">2.7.7.3</ecNumber>
    </recommendedName>
    <alternativeName>
        <fullName evidence="1">Dephospho-CoA pyrophosphorylase</fullName>
    </alternativeName>
    <alternativeName>
        <fullName evidence="1">Pantetheine-phosphate adenylyltransferase</fullName>
        <shortName evidence="1">PPAT</shortName>
    </alternativeName>
</protein>